<sequence>MSFWKNKTLAEMDTQEWESLCDGCGKCCLNKLIDDETEELYYTNAACKLLDPKDGHCVHYVQRFNFVPSCTQVTVDNVAELTWLPDSCAYRRLHLGRELPSWHPLITGSKEAMHIAGMSIKNKVTCETKVKYMEDHIVLWPLKDIE</sequence>
<feature type="chain" id="PRO_1000082977" description="UPF0260 protein Ssed_2516">
    <location>
        <begin position="1"/>
        <end position="146"/>
    </location>
</feature>
<name>Y2516_SHESH</name>
<gene>
    <name type="ordered locus">Ssed_2516</name>
</gene>
<keyword id="KW-1185">Reference proteome</keyword>
<evidence type="ECO:0000255" key="1">
    <source>
        <dbReference type="HAMAP-Rule" id="MF_00676"/>
    </source>
</evidence>
<protein>
    <recommendedName>
        <fullName evidence="1">UPF0260 protein Ssed_2516</fullName>
    </recommendedName>
</protein>
<accession>A8FWA0</accession>
<dbReference type="EMBL" id="CP000821">
    <property type="protein sequence ID" value="ABV37123.1"/>
    <property type="molecule type" value="Genomic_DNA"/>
</dbReference>
<dbReference type="RefSeq" id="WP_012142856.1">
    <property type="nucleotide sequence ID" value="NC_009831.1"/>
</dbReference>
<dbReference type="STRING" id="425104.Ssed_2516"/>
<dbReference type="KEGG" id="sse:Ssed_2516"/>
<dbReference type="eggNOG" id="COG2983">
    <property type="taxonomic scope" value="Bacteria"/>
</dbReference>
<dbReference type="HOGENOM" id="CLU_109769_0_1_6"/>
<dbReference type="OrthoDB" id="9786855at2"/>
<dbReference type="Proteomes" id="UP000002015">
    <property type="component" value="Chromosome"/>
</dbReference>
<dbReference type="HAMAP" id="MF_00676">
    <property type="entry name" value="UPF0260"/>
    <property type="match status" value="1"/>
</dbReference>
<dbReference type="InterPro" id="IPR005358">
    <property type="entry name" value="Puta_zinc/iron-chelating_dom"/>
</dbReference>
<dbReference type="InterPro" id="IPR008228">
    <property type="entry name" value="UCP006173"/>
</dbReference>
<dbReference type="NCBIfam" id="NF003500">
    <property type="entry name" value="PRK05170.1-4"/>
    <property type="match status" value="1"/>
</dbReference>
<dbReference type="NCBIfam" id="NF003501">
    <property type="entry name" value="PRK05170.1-5"/>
    <property type="match status" value="1"/>
</dbReference>
<dbReference type="NCBIfam" id="NF003507">
    <property type="entry name" value="PRK05170.2-5"/>
    <property type="match status" value="1"/>
</dbReference>
<dbReference type="PANTHER" id="PTHR37421">
    <property type="entry name" value="UPF0260 PROTEIN YCGN"/>
    <property type="match status" value="1"/>
</dbReference>
<dbReference type="PANTHER" id="PTHR37421:SF1">
    <property type="entry name" value="UPF0260 PROTEIN YCGN"/>
    <property type="match status" value="1"/>
</dbReference>
<dbReference type="Pfam" id="PF03692">
    <property type="entry name" value="CxxCxxCC"/>
    <property type="match status" value="1"/>
</dbReference>
<dbReference type="PIRSF" id="PIRSF006173">
    <property type="entry name" value="UCP006173"/>
    <property type="match status" value="1"/>
</dbReference>
<organism>
    <name type="scientific">Shewanella sediminis (strain HAW-EB3)</name>
    <dbReference type="NCBI Taxonomy" id="425104"/>
    <lineage>
        <taxon>Bacteria</taxon>
        <taxon>Pseudomonadati</taxon>
        <taxon>Pseudomonadota</taxon>
        <taxon>Gammaproteobacteria</taxon>
        <taxon>Alteromonadales</taxon>
        <taxon>Shewanellaceae</taxon>
        <taxon>Shewanella</taxon>
    </lineage>
</organism>
<proteinExistence type="inferred from homology"/>
<reference key="1">
    <citation type="submission" date="2007-08" db="EMBL/GenBank/DDBJ databases">
        <title>Complete sequence of Shewanella sediminis HAW-EB3.</title>
        <authorList>
            <consortium name="US DOE Joint Genome Institute"/>
            <person name="Copeland A."/>
            <person name="Lucas S."/>
            <person name="Lapidus A."/>
            <person name="Barry K."/>
            <person name="Glavina del Rio T."/>
            <person name="Dalin E."/>
            <person name="Tice H."/>
            <person name="Pitluck S."/>
            <person name="Chertkov O."/>
            <person name="Brettin T."/>
            <person name="Bruce D."/>
            <person name="Detter J.C."/>
            <person name="Han C."/>
            <person name="Schmutz J."/>
            <person name="Larimer F."/>
            <person name="Land M."/>
            <person name="Hauser L."/>
            <person name="Kyrpides N."/>
            <person name="Kim E."/>
            <person name="Zhao J.-S."/>
            <person name="Richardson P."/>
        </authorList>
    </citation>
    <scope>NUCLEOTIDE SEQUENCE [LARGE SCALE GENOMIC DNA]</scope>
    <source>
        <strain>HAW-EB3</strain>
    </source>
</reference>
<comment type="similarity">
    <text evidence="1">Belongs to the UPF0260 family.</text>
</comment>